<gene>
    <name type="primary">MT-CYB</name>
    <name type="synonym">COB</name>
    <name type="synonym">CYTB</name>
    <name type="synonym">MTCYB</name>
</gene>
<sequence length="379" mass="42855">MTNIRKTHPLMKIVNNAFIDLPAPSNISSWWNFGSLLGICLILQILTGLFLAMHYTPDTTTAFSSVTHICRDVNYGWIIRYMHANGASMFFICLFMHVGRGLYYGSYTFLETWNIGVILLFATMATAFMGYVLPWGQMSFWGATVITNLLSAIPYIGTNLVEWIWGGFSVDKATLTRFFAFHFIFPFMIAALAMVHLLFLHETGSNNPTGIPSDTDKIPFHPYYTIKDILGAILLILVLMLLVLFTPDLLGDPDNYTPANPLNTPPHIKPEWYFLFAYAILRSIPNKLGGVLALILSILVLVIMPLLHTSKQRSMMFRPISQCMFWILVADLLTLTWIGGQPVEHPYIIIGQLASIMYFLIILVMMPVASIIENNLLKW</sequence>
<proteinExistence type="inferred from homology"/>
<evidence type="ECO:0000250" key="1"/>
<evidence type="ECO:0000250" key="2">
    <source>
        <dbReference type="UniProtKB" id="P00157"/>
    </source>
</evidence>
<evidence type="ECO:0000255" key="3">
    <source>
        <dbReference type="PROSITE-ProRule" id="PRU00967"/>
    </source>
</evidence>
<evidence type="ECO:0000255" key="4">
    <source>
        <dbReference type="PROSITE-ProRule" id="PRU00968"/>
    </source>
</evidence>
<protein>
    <recommendedName>
        <fullName>Cytochrome b</fullName>
    </recommendedName>
    <alternativeName>
        <fullName>Complex III subunit 3</fullName>
    </alternativeName>
    <alternativeName>
        <fullName>Complex III subunit III</fullName>
    </alternativeName>
    <alternativeName>
        <fullName>Cytochrome b-c1 complex subunit 3</fullName>
    </alternativeName>
    <alternativeName>
        <fullName>Ubiquinol-cytochrome-c reductase complex cytochrome b subunit</fullName>
    </alternativeName>
</protein>
<dbReference type="EMBL" id="AF034728">
    <property type="protein sequence ID" value="AAC31683.1"/>
    <property type="molecule type" value="Genomic_DNA"/>
</dbReference>
<dbReference type="SMR" id="O78779"/>
<dbReference type="GO" id="GO:0005743">
    <property type="term" value="C:mitochondrial inner membrane"/>
    <property type="evidence" value="ECO:0007669"/>
    <property type="project" value="UniProtKB-SubCell"/>
</dbReference>
<dbReference type="GO" id="GO:0045275">
    <property type="term" value="C:respiratory chain complex III"/>
    <property type="evidence" value="ECO:0007669"/>
    <property type="project" value="InterPro"/>
</dbReference>
<dbReference type="GO" id="GO:0046872">
    <property type="term" value="F:metal ion binding"/>
    <property type="evidence" value="ECO:0007669"/>
    <property type="project" value="UniProtKB-KW"/>
</dbReference>
<dbReference type="GO" id="GO:0008121">
    <property type="term" value="F:ubiquinol-cytochrome-c reductase activity"/>
    <property type="evidence" value="ECO:0007669"/>
    <property type="project" value="InterPro"/>
</dbReference>
<dbReference type="GO" id="GO:0006122">
    <property type="term" value="P:mitochondrial electron transport, ubiquinol to cytochrome c"/>
    <property type="evidence" value="ECO:0007669"/>
    <property type="project" value="TreeGrafter"/>
</dbReference>
<dbReference type="CDD" id="cd00290">
    <property type="entry name" value="cytochrome_b_C"/>
    <property type="match status" value="1"/>
</dbReference>
<dbReference type="CDD" id="cd00284">
    <property type="entry name" value="Cytochrome_b_N"/>
    <property type="match status" value="1"/>
</dbReference>
<dbReference type="FunFam" id="1.20.810.10:FF:000002">
    <property type="entry name" value="Cytochrome b"/>
    <property type="match status" value="1"/>
</dbReference>
<dbReference type="Gene3D" id="1.20.810.10">
    <property type="entry name" value="Cytochrome Bc1 Complex, Chain C"/>
    <property type="match status" value="1"/>
</dbReference>
<dbReference type="InterPro" id="IPR005798">
    <property type="entry name" value="Cyt_b/b6_C"/>
</dbReference>
<dbReference type="InterPro" id="IPR036150">
    <property type="entry name" value="Cyt_b/b6_C_sf"/>
</dbReference>
<dbReference type="InterPro" id="IPR005797">
    <property type="entry name" value="Cyt_b/b6_N"/>
</dbReference>
<dbReference type="InterPro" id="IPR027387">
    <property type="entry name" value="Cytb/b6-like_sf"/>
</dbReference>
<dbReference type="InterPro" id="IPR030689">
    <property type="entry name" value="Cytochrome_b"/>
</dbReference>
<dbReference type="InterPro" id="IPR048260">
    <property type="entry name" value="Cytochrome_b_C_euk/bac"/>
</dbReference>
<dbReference type="InterPro" id="IPR048259">
    <property type="entry name" value="Cytochrome_b_N_euk/bac"/>
</dbReference>
<dbReference type="InterPro" id="IPR016174">
    <property type="entry name" value="Di-haem_cyt_TM"/>
</dbReference>
<dbReference type="PANTHER" id="PTHR19271">
    <property type="entry name" value="CYTOCHROME B"/>
    <property type="match status" value="1"/>
</dbReference>
<dbReference type="PANTHER" id="PTHR19271:SF16">
    <property type="entry name" value="CYTOCHROME B"/>
    <property type="match status" value="1"/>
</dbReference>
<dbReference type="Pfam" id="PF00032">
    <property type="entry name" value="Cytochrom_B_C"/>
    <property type="match status" value="1"/>
</dbReference>
<dbReference type="Pfam" id="PF00033">
    <property type="entry name" value="Cytochrome_B"/>
    <property type="match status" value="1"/>
</dbReference>
<dbReference type="PIRSF" id="PIRSF038885">
    <property type="entry name" value="COB"/>
    <property type="match status" value="1"/>
</dbReference>
<dbReference type="SUPFAM" id="SSF81648">
    <property type="entry name" value="a domain/subunit of cytochrome bc1 complex (Ubiquinol-cytochrome c reductase)"/>
    <property type="match status" value="1"/>
</dbReference>
<dbReference type="SUPFAM" id="SSF81342">
    <property type="entry name" value="Transmembrane di-heme cytochromes"/>
    <property type="match status" value="1"/>
</dbReference>
<dbReference type="PROSITE" id="PS51003">
    <property type="entry name" value="CYTB_CTER"/>
    <property type="match status" value="1"/>
</dbReference>
<dbReference type="PROSITE" id="PS51002">
    <property type="entry name" value="CYTB_NTER"/>
    <property type="match status" value="1"/>
</dbReference>
<reference key="1">
    <citation type="journal article" date="1998" name="J. Mammal. Evol.">
        <title>Molecular systematics of the subfamily Caprinae (Artiodactyla, Bovidae) as determined from cytochrome b sequences.</title>
        <authorList>
            <person name="Hassanin A."/>
            <person name="Pasquet E."/>
            <person name="Vigne J.-D."/>
        </authorList>
    </citation>
    <scope>NUCLEOTIDE SEQUENCE [GENOMIC DNA]</scope>
</reference>
<name>CYB_OVIDA</name>
<feature type="chain" id="PRO_0000061333" description="Cytochrome b">
    <location>
        <begin position="1"/>
        <end position="379"/>
    </location>
</feature>
<feature type="transmembrane region" description="Helical" evidence="2">
    <location>
        <begin position="33"/>
        <end position="53"/>
    </location>
</feature>
<feature type="transmembrane region" description="Helical" evidence="2">
    <location>
        <begin position="77"/>
        <end position="98"/>
    </location>
</feature>
<feature type="transmembrane region" description="Helical" evidence="2">
    <location>
        <begin position="113"/>
        <end position="133"/>
    </location>
</feature>
<feature type="transmembrane region" description="Helical" evidence="2">
    <location>
        <begin position="178"/>
        <end position="198"/>
    </location>
</feature>
<feature type="transmembrane region" description="Helical" evidence="2">
    <location>
        <begin position="226"/>
        <end position="246"/>
    </location>
</feature>
<feature type="transmembrane region" description="Helical" evidence="2">
    <location>
        <begin position="288"/>
        <end position="308"/>
    </location>
</feature>
<feature type="transmembrane region" description="Helical" evidence="2">
    <location>
        <begin position="320"/>
        <end position="340"/>
    </location>
</feature>
<feature type="transmembrane region" description="Helical" evidence="2">
    <location>
        <begin position="347"/>
        <end position="367"/>
    </location>
</feature>
<feature type="binding site" description="axial binding residue" evidence="2">
    <location>
        <position position="83"/>
    </location>
    <ligand>
        <name>heme b</name>
        <dbReference type="ChEBI" id="CHEBI:60344"/>
        <label>b562</label>
    </ligand>
    <ligandPart>
        <name>Fe</name>
        <dbReference type="ChEBI" id="CHEBI:18248"/>
    </ligandPart>
</feature>
<feature type="binding site" description="axial binding residue" evidence="2">
    <location>
        <position position="97"/>
    </location>
    <ligand>
        <name>heme b</name>
        <dbReference type="ChEBI" id="CHEBI:60344"/>
        <label>b566</label>
    </ligand>
    <ligandPart>
        <name>Fe</name>
        <dbReference type="ChEBI" id="CHEBI:18248"/>
    </ligandPart>
</feature>
<feature type="binding site" description="axial binding residue" evidence="2">
    <location>
        <position position="182"/>
    </location>
    <ligand>
        <name>heme b</name>
        <dbReference type="ChEBI" id="CHEBI:60344"/>
        <label>b562</label>
    </ligand>
    <ligandPart>
        <name>Fe</name>
        <dbReference type="ChEBI" id="CHEBI:18248"/>
    </ligandPart>
</feature>
<feature type="binding site" description="axial binding residue" evidence="2">
    <location>
        <position position="196"/>
    </location>
    <ligand>
        <name>heme b</name>
        <dbReference type="ChEBI" id="CHEBI:60344"/>
        <label>b566</label>
    </ligand>
    <ligandPart>
        <name>Fe</name>
        <dbReference type="ChEBI" id="CHEBI:18248"/>
    </ligandPart>
</feature>
<feature type="binding site" evidence="2">
    <location>
        <position position="201"/>
    </location>
    <ligand>
        <name>a ubiquinone</name>
        <dbReference type="ChEBI" id="CHEBI:16389"/>
    </ligand>
</feature>
<keyword id="KW-0249">Electron transport</keyword>
<keyword id="KW-0349">Heme</keyword>
<keyword id="KW-0408">Iron</keyword>
<keyword id="KW-0472">Membrane</keyword>
<keyword id="KW-0479">Metal-binding</keyword>
<keyword id="KW-0496">Mitochondrion</keyword>
<keyword id="KW-0999">Mitochondrion inner membrane</keyword>
<keyword id="KW-0679">Respiratory chain</keyword>
<keyword id="KW-0812">Transmembrane</keyword>
<keyword id="KW-1133">Transmembrane helix</keyword>
<keyword id="KW-0813">Transport</keyword>
<keyword id="KW-0830">Ubiquinone</keyword>
<comment type="function">
    <text evidence="2">Component of the ubiquinol-cytochrome c reductase complex (complex III or cytochrome b-c1 complex) that is part of the mitochondrial respiratory chain. The b-c1 complex mediates electron transfer from ubiquinol to cytochrome c. Contributes to the generation of a proton gradient across the mitochondrial membrane that is then used for ATP synthesis.</text>
</comment>
<comment type="cofactor">
    <cofactor evidence="2">
        <name>heme b</name>
        <dbReference type="ChEBI" id="CHEBI:60344"/>
    </cofactor>
    <text evidence="2">Binds 2 heme b groups non-covalently.</text>
</comment>
<comment type="subunit">
    <text evidence="2">The cytochrome bc1 complex contains 11 subunits: 3 respiratory subunits (MT-CYB, CYC1 and UQCRFS1), 2 core proteins (UQCRC1 and UQCRC2) and 6 low-molecular weight proteins (UQCRH/QCR6, UQCRB/QCR7, UQCRQ/QCR8, UQCR10/QCR9, UQCR11/QCR10 and a cleavage product of UQCRFS1). This cytochrome bc1 complex then forms a dimer.</text>
</comment>
<comment type="subcellular location">
    <subcellularLocation>
        <location evidence="2">Mitochondrion inner membrane</location>
        <topology evidence="2">Multi-pass membrane protein</topology>
    </subcellularLocation>
</comment>
<comment type="miscellaneous">
    <text evidence="1">Heme 1 (or BL or b562) is low-potential and absorbs at about 562 nm, and heme 2 (or BH or b566) is high-potential and absorbs at about 566 nm.</text>
</comment>
<comment type="similarity">
    <text evidence="3 4">Belongs to the cytochrome b family.</text>
</comment>
<comment type="caution">
    <text evidence="2">The full-length protein contains only eight transmembrane helices, not nine as predicted by bioinformatics tools.</text>
</comment>
<organism>
    <name type="scientific">Ovis dalli</name>
    <name type="common">Dall's sheep</name>
    <name type="synonym">Thinhorn sheep</name>
    <dbReference type="NCBI Taxonomy" id="9943"/>
    <lineage>
        <taxon>Eukaryota</taxon>
        <taxon>Metazoa</taxon>
        <taxon>Chordata</taxon>
        <taxon>Craniata</taxon>
        <taxon>Vertebrata</taxon>
        <taxon>Euteleostomi</taxon>
        <taxon>Mammalia</taxon>
        <taxon>Eutheria</taxon>
        <taxon>Laurasiatheria</taxon>
        <taxon>Artiodactyla</taxon>
        <taxon>Ruminantia</taxon>
        <taxon>Pecora</taxon>
        <taxon>Bovidae</taxon>
        <taxon>Caprinae</taxon>
        <taxon>Ovis</taxon>
    </lineage>
</organism>
<geneLocation type="mitochondrion"/>
<accession>O78779</accession>